<protein>
    <recommendedName>
        <fullName evidence="1">Thiamine-phosphate synthase</fullName>
        <shortName evidence="1">TP synthase</shortName>
        <shortName evidence="1">TPS</shortName>
        <ecNumber evidence="1">2.5.1.3</ecNumber>
    </recommendedName>
    <alternativeName>
        <fullName evidence="1">Thiamine-phosphate pyrophosphorylase</fullName>
        <shortName evidence="1">TMP pyrophosphorylase</shortName>
        <shortName evidence="1">TMP-PPase</shortName>
    </alternativeName>
</protein>
<dbReference type="EC" id="2.5.1.3" evidence="1"/>
<dbReference type="EMBL" id="AE008922">
    <property type="protein sequence ID" value="AAM42539.1"/>
    <property type="molecule type" value="Genomic_DNA"/>
</dbReference>
<dbReference type="RefSeq" id="NP_638615.1">
    <property type="nucleotide sequence ID" value="NC_003902.1"/>
</dbReference>
<dbReference type="RefSeq" id="WP_011038371.1">
    <property type="nucleotide sequence ID" value="NC_003902.1"/>
</dbReference>
<dbReference type="SMR" id="Q8P5R7"/>
<dbReference type="STRING" id="190485.XCC3269"/>
<dbReference type="EnsemblBacteria" id="AAM42539">
    <property type="protein sequence ID" value="AAM42539"/>
    <property type="gene ID" value="XCC3269"/>
</dbReference>
<dbReference type="KEGG" id="xcc:XCC3269"/>
<dbReference type="PATRIC" id="fig|190485.4.peg.3492"/>
<dbReference type="eggNOG" id="COG0352">
    <property type="taxonomic scope" value="Bacteria"/>
</dbReference>
<dbReference type="HOGENOM" id="CLU_018272_3_1_6"/>
<dbReference type="OrthoDB" id="9789949at2"/>
<dbReference type="UniPathway" id="UPA00060">
    <property type="reaction ID" value="UER00141"/>
</dbReference>
<dbReference type="Proteomes" id="UP000001010">
    <property type="component" value="Chromosome"/>
</dbReference>
<dbReference type="GO" id="GO:0005737">
    <property type="term" value="C:cytoplasm"/>
    <property type="evidence" value="ECO:0000318"/>
    <property type="project" value="GO_Central"/>
</dbReference>
<dbReference type="GO" id="GO:0000287">
    <property type="term" value="F:magnesium ion binding"/>
    <property type="evidence" value="ECO:0007669"/>
    <property type="project" value="UniProtKB-UniRule"/>
</dbReference>
<dbReference type="GO" id="GO:0004789">
    <property type="term" value="F:thiamine-phosphate diphosphorylase activity"/>
    <property type="evidence" value="ECO:0000318"/>
    <property type="project" value="GO_Central"/>
</dbReference>
<dbReference type="GO" id="GO:0009228">
    <property type="term" value="P:thiamine biosynthetic process"/>
    <property type="evidence" value="ECO:0000318"/>
    <property type="project" value="GO_Central"/>
</dbReference>
<dbReference type="GO" id="GO:0009229">
    <property type="term" value="P:thiamine diphosphate biosynthetic process"/>
    <property type="evidence" value="ECO:0007669"/>
    <property type="project" value="UniProtKB-UniRule"/>
</dbReference>
<dbReference type="CDD" id="cd00564">
    <property type="entry name" value="TMP_TenI"/>
    <property type="match status" value="1"/>
</dbReference>
<dbReference type="FunFam" id="3.20.20.70:FF:000096">
    <property type="entry name" value="Thiamine-phosphate synthase"/>
    <property type="match status" value="1"/>
</dbReference>
<dbReference type="Gene3D" id="3.20.20.70">
    <property type="entry name" value="Aldolase class I"/>
    <property type="match status" value="1"/>
</dbReference>
<dbReference type="HAMAP" id="MF_00097">
    <property type="entry name" value="TMP_synthase"/>
    <property type="match status" value="1"/>
</dbReference>
<dbReference type="InterPro" id="IPR013785">
    <property type="entry name" value="Aldolase_TIM"/>
</dbReference>
<dbReference type="InterPro" id="IPR036206">
    <property type="entry name" value="ThiamineP_synth_sf"/>
</dbReference>
<dbReference type="InterPro" id="IPR022998">
    <property type="entry name" value="ThiamineP_synth_TenI"/>
</dbReference>
<dbReference type="InterPro" id="IPR034291">
    <property type="entry name" value="TMP_synthase"/>
</dbReference>
<dbReference type="NCBIfam" id="TIGR00693">
    <property type="entry name" value="thiE"/>
    <property type="match status" value="1"/>
</dbReference>
<dbReference type="PANTHER" id="PTHR20857">
    <property type="entry name" value="THIAMINE-PHOSPHATE PYROPHOSPHORYLASE"/>
    <property type="match status" value="1"/>
</dbReference>
<dbReference type="PANTHER" id="PTHR20857:SF15">
    <property type="entry name" value="THIAMINE-PHOSPHATE SYNTHASE"/>
    <property type="match status" value="1"/>
</dbReference>
<dbReference type="Pfam" id="PF02581">
    <property type="entry name" value="TMP-TENI"/>
    <property type="match status" value="1"/>
</dbReference>
<dbReference type="SUPFAM" id="SSF51391">
    <property type="entry name" value="Thiamin phosphate synthase"/>
    <property type="match status" value="1"/>
</dbReference>
<reference key="1">
    <citation type="journal article" date="2002" name="Nature">
        <title>Comparison of the genomes of two Xanthomonas pathogens with differing host specificities.</title>
        <authorList>
            <person name="da Silva A.C.R."/>
            <person name="Ferro J.A."/>
            <person name="Reinach F.C."/>
            <person name="Farah C.S."/>
            <person name="Furlan L.R."/>
            <person name="Quaggio R.B."/>
            <person name="Monteiro-Vitorello C.B."/>
            <person name="Van Sluys M.A."/>
            <person name="Almeida N.F. Jr."/>
            <person name="Alves L.M.C."/>
            <person name="do Amaral A.M."/>
            <person name="Bertolini M.C."/>
            <person name="Camargo L.E.A."/>
            <person name="Camarotte G."/>
            <person name="Cannavan F."/>
            <person name="Cardozo J."/>
            <person name="Chambergo F."/>
            <person name="Ciapina L.P."/>
            <person name="Cicarelli R.M.B."/>
            <person name="Coutinho L.L."/>
            <person name="Cursino-Santos J.R."/>
            <person name="El-Dorry H."/>
            <person name="Faria J.B."/>
            <person name="Ferreira A.J.S."/>
            <person name="Ferreira R.C.C."/>
            <person name="Ferro M.I.T."/>
            <person name="Formighieri E.F."/>
            <person name="Franco M.C."/>
            <person name="Greggio C.C."/>
            <person name="Gruber A."/>
            <person name="Katsuyama A.M."/>
            <person name="Kishi L.T."/>
            <person name="Leite R.P."/>
            <person name="Lemos E.G.M."/>
            <person name="Lemos M.V.F."/>
            <person name="Locali E.C."/>
            <person name="Machado M.A."/>
            <person name="Madeira A.M.B.N."/>
            <person name="Martinez-Rossi N.M."/>
            <person name="Martins E.C."/>
            <person name="Meidanis J."/>
            <person name="Menck C.F.M."/>
            <person name="Miyaki C.Y."/>
            <person name="Moon D.H."/>
            <person name="Moreira L.M."/>
            <person name="Novo M.T.M."/>
            <person name="Okura V.K."/>
            <person name="Oliveira M.C."/>
            <person name="Oliveira V.R."/>
            <person name="Pereira H.A."/>
            <person name="Rossi A."/>
            <person name="Sena J.A.D."/>
            <person name="Silva C."/>
            <person name="de Souza R.F."/>
            <person name="Spinola L.A.F."/>
            <person name="Takita M.A."/>
            <person name="Tamura R.E."/>
            <person name="Teixeira E.C."/>
            <person name="Tezza R.I.D."/>
            <person name="Trindade dos Santos M."/>
            <person name="Truffi D."/>
            <person name="Tsai S.M."/>
            <person name="White F.F."/>
            <person name="Setubal J.C."/>
            <person name="Kitajima J.P."/>
        </authorList>
    </citation>
    <scope>NUCLEOTIDE SEQUENCE [LARGE SCALE GENOMIC DNA]</scope>
    <source>
        <strain>ATCC 33913 / DSM 3586 / NCPPB 528 / LMG 568 / P 25</strain>
    </source>
</reference>
<feature type="chain" id="PRO_0000157063" description="Thiamine-phosphate synthase">
    <location>
        <begin position="1"/>
        <end position="207"/>
    </location>
</feature>
<feature type="binding site" evidence="1">
    <location>
        <begin position="38"/>
        <end position="42"/>
    </location>
    <ligand>
        <name>4-amino-2-methyl-5-(diphosphooxymethyl)pyrimidine</name>
        <dbReference type="ChEBI" id="CHEBI:57841"/>
    </ligand>
</feature>
<feature type="binding site" evidence="1">
    <location>
        <position position="70"/>
    </location>
    <ligand>
        <name>4-amino-2-methyl-5-(diphosphooxymethyl)pyrimidine</name>
        <dbReference type="ChEBI" id="CHEBI:57841"/>
    </ligand>
</feature>
<feature type="binding site" evidence="1">
    <location>
        <position position="71"/>
    </location>
    <ligand>
        <name>Mg(2+)</name>
        <dbReference type="ChEBI" id="CHEBI:18420"/>
    </ligand>
</feature>
<feature type="binding site" evidence="1">
    <location>
        <position position="90"/>
    </location>
    <ligand>
        <name>Mg(2+)</name>
        <dbReference type="ChEBI" id="CHEBI:18420"/>
    </ligand>
</feature>
<feature type="binding site" evidence="1">
    <location>
        <position position="109"/>
    </location>
    <ligand>
        <name>4-amino-2-methyl-5-(diphosphooxymethyl)pyrimidine</name>
        <dbReference type="ChEBI" id="CHEBI:57841"/>
    </ligand>
</feature>
<feature type="binding site" evidence="1">
    <location>
        <begin position="136"/>
        <end position="138"/>
    </location>
    <ligand>
        <name>2-[(2R,5Z)-2-carboxy-4-methylthiazol-5(2H)-ylidene]ethyl phosphate</name>
        <dbReference type="ChEBI" id="CHEBI:62899"/>
    </ligand>
</feature>
<feature type="binding site" evidence="1">
    <location>
        <position position="139"/>
    </location>
    <ligand>
        <name>4-amino-2-methyl-5-(diphosphooxymethyl)pyrimidine</name>
        <dbReference type="ChEBI" id="CHEBI:57841"/>
    </ligand>
</feature>
<feature type="binding site" evidence="1">
    <location>
        <position position="165"/>
    </location>
    <ligand>
        <name>2-[(2R,5Z)-2-carboxy-4-methylthiazol-5(2H)-ylidene]ethyl phosphate</name>
        <dbReference type="ChEBI" id="CHEBI:62899"/>
    </ligand>
</feature>
<feature type="binding site" evidence="1">
    <location>
        <begin position="185"/>
        <end position="186"/>
    </location>
    <ligand>
        <name>2-[(2R,5Z)-2-carboxy-4-methylthiazol-5(2H)-ylidene]ethyl phosphate</name>
        <dbReference type="ChEBI" id="CHEBI:62899"/>
    </ligand>
</feature>
<proteinExistence type="inferred from homology"/>
<comment type="function">
    <text evidence="1">Condenses 4-methyl-5-(beta-hydroxyethyl)thiazole monophosphate (THZ-P) and 2-methyl-4-amino-5-hydroxymethyl pyrimidine pyrophosphate (HMP-PP) to form thiamine monophosphate (TMP).</text>
</comment>
<comment type="catalytic activity">
    <reaction evidence="1">
        <text>2-[(2R,5Z)-2-carboxy-4-methylthiazol-5(2H)-ylidene]ethyl phosphate + 4-amino-2-methyl-5-(diphosphooxymethyl)pyrimidine + 2 H(+) = thiamine phosphate + CO2 + diphosphate</text>
        <dbReference type="Rhea" id="RHEA:47844"/>
        <dbReference type="ChEBI" id="CHEBI:15378"/>
        <dbReference type="ChEBI" id="CHEBI:16526"/>
        <dbReference type="ChEBI" id="CHEBI:33019"/>
        <dbReference type="ChEBI" id="CHEBI:37575"/>
        <dbReference type="ChEBI" id="CHEBI:57841"/>
        <dbReference type="ChEBI" id="CHEBI:62899"/>
        <dbReference type="EC" id="2.5.1.3"/>
    </reaction>
</comment>
<comment type="catalytic activity">
    <reaction evidence="1">
        <text>2-(2-carboxy-4-methylthiazol-5-yl)ethyl phosphate + 4-amino-2-methyl-5-(diphosphooxymethyl)pyrimidine + 2 H(+) = thiamine phosphate + CO2 + diphosphate</text>
        <dbReference type="Rhea" id="RHEA:47848"/>
        <dbReference type="ChEBI" id="CHEBI:15378"/>
        <dbReference type="ChEBI" id="CHEBI:16526"/>
        <dbReference type="ChEBI" id="CHEBI:33019"/>
        <dbReference type="ChEBI" id="CHEBI:37575"/>
        <dbReference type="ChEBI" id="CHEBI:57841"/>
        <dbReference type="ChEBI" id="CHEBI:62890"/>
        <dbReference type="EC" id="2.5.1.3"/>
    </reaction>
</comment>
<comment type="catalytic activity">
    <reaction evidence="1">
        <text>4-methyl-5-(2-phosphooxyethyl)-thiazole + 4-amino-2-methyl-5-(diphosphooxymethyl)pyrimidine + H(+) = thiamine phosphate + diphosphate</text>
        <dbReference type="Rhea" id="RHEA:22328"/>
        <dbReference type="ChEBI" id="CHEBI:15378"/>
        <dbReference type="ChEBI" id="CHEBI:33019"/>
        <dbReference type="ChEBI" id="CHEBI:37575"/>
        <dbReference type="ChEBI" id="CHEBI:57841"/>
        <dbReference type="ChEBI" id="CHEBI:58296"/>
        <dbReference type="EC" id="2.5.1.3"/>
    </reaction>
</comment>
<comment type="cofactor">
    <cofactor evidence="1">
        <name>Mg(2+)</name>
        <dbReference type="ChEBI" id="CHEBI:18420"/>
    </cofactor>
    <text evidence="1">Binds 1 Mg(2+) ion per subunit.</text>
</comment>
<comment type="pathway">
    <text evidence="1">Cofactor biosynthesis; thiamine diphosphate biosynthesis; thiamine phosphate from 4-amino-2-methyl-5-diphosphomethylpyrimidine and 4-methyl-5-(2-phosphoethyl)-thiazole: step 1/1.</text>
</comment>
<comment type="similarity">
    <text evidence="1">Belongs to the thiamine-phosphate synthase family.</text>
</comment>
<name>THIE_XANCP</name>
<evidence type="ECO:0000255" key="1">
    <source>
        <dbReference type="HAMAP-Rule" id="MF_00097"/>
    </source>
</evidence>
<keyword id="KW-0460">Magnesium</keyword>
<keyword id="KW-0479">Metal-binding</keyword>
<keyword id="KW-1185">Reference proteome</keyword>
<keyword id="KW-0784">Thiamine biosynthesis</keyword>
<keyword id="KW-0808">Transferase</keyword>
<organism>
    <name type="scientific">Xanthomonas campestris pv. campestris (strain ATCC 33913 / DSM 3586 / NCPPB 528 / LMG 568 / P 25)</name>
    <dbReference type="NCBI Taxonomy" id="190485"/>
    <lineage>
        <taxon>Bacteria</taxon>
        <taxon>Pseudomonadati</taxon>
        <taxon>Pseudomonadota</taxon>
        <taxon>Gammaproteobacteria</taxon>
        <taxon>Lysobacterales</taxon>
        <taxon>Lysobacteraceae</taxon>
        <taxon>Xanthomonas</taxon>
    </lineage>
</organism>
<sequence>MPTLQNARGVYLITPDTRDTAQLLACTLPLLPHITWLQYRNKQADAALRLAQATALRAACTAHGVPLIINDDAALAQQVGADGVHLGEDDGEVAAARALLGASAIIGVSCYDEIERARAAAAAGANYVAFGAFFPTATKVTTRRATPALLHEAAALGLPRVAIGGITPSQVPELVTAGADLIAVVSGVYAAADPVAAVQAYRAGFTQ</sequence>
<gene>
    <name evidence="1" type="primary">thiE</name>
    <name type="ordered locus">XCC3269</name>
</gene>
<accession>Q8P5R7</accession>